<accession>Q53FE4</accession>
<accession>Q6FI84</accession>
<accession>Q6IS77</accession>
<accession>Q8NA78</accession>
<accession>Q9H0D9</accession>
<keyword id="KW-0025">Alternative splicing</keyword>
<keyword id="KW-1267">Proteomics identification</keyword>
<keyword id="KW-1185">Reference proteome</keyword>
<evidence type="ECO:0000256" key="1">
    <source>
        <dbReference type="SAM" id="MobiDB-lite"/>
    </source>
</evidence>
<evidence type="ECO:0000269" key="2">
    <source>
    </source>
</evidence>
<evidence type="ECO:0000269" key="3">
    <source>
    </source>
</evidence>
<evidence type="ECO:0000269" key="4">
    <source ref="2"/>
</evidence>
<evidence type="ECO:0000303" key="5">
    <source>
    </source>
</evidence>
<evidence type="ECO:0000305" key="6"/>
<sequence>MNLNPPTSALQIEGKGSHIMARNVSCFLVRHTPHPRRVCHIKGLNNIPICTVNDDENAFGTLWGVGQSNYLEKNRIPFANCSYPSSTAVQESPVRGMSPAPNGAKVPPRPHSEPSRKIKECFKTSSENPLVIKKEEIKAKRPPSPPKACSTPGSCSSGMTSTKNDVKANTICIPNYLDQEIKILAKLCSILHTDSLAEVLQWLLHATSKEKEWVSALIHSELAEINLLTHHRRNTSMEPAAETGKPPTVKSPPTVKLPPNFTAKSKVLTRDTEGDQPTRVSSQGSEENKEVPKEAEHKPPLLIRRNNMKIPVAEYFSKPNSPPRPNTQESGSAKPVSARSIQEYNLCPQRACYPSTHRR</sequence>
<gene>
    <name type="primary">C4orf17</name>
</gene>
<proteinExistence type="evidence at protein level"/>
<comment type="interaction">
    <interactant intactId="EBI-715110">
        <id>Q53FE4</id>
    </interactant>
    <interactant intactId="EBI-11096309">
        <id>Q9NYB9-2</id>
        <label>ABI2</label>
    </interactant>
    <organismsDiffer>false</organismsDiffer>
    <experiments>3</experiments>
</comment>
<comment type="interaction">
    <interactant intactId="EBI-715110">
        <id>Q53FE4</id>
    </interactant>
    <interactant intactId="EBI-747754">
        <id>P28799</id>
        <label>GRN</label>
    </interactant>
    <organismsDiffer>false</organismsDiffer>
    <experiments>3</experiments>
</comment>
<comment type="interaction">
    <interactant intactId="EBI-715110">
        <id>Q53FE4</id>
    </interactant>
    <interactant intactId="EBI-748420">
        <id>Q9NSC5</id>
        <label>HOMER3</label>
    </interactant>
    <organismsDiffer>false</organismsDiffer>
    <experiments>3</experiments>
</comment>
<comment type="interaction">
    <interactant intactId="EBI-715110">
        <id>Q53FE4</id>
    </interactant>
    <interactant intactId="EBI-2341787">
        <id>Q17RB8</id>
        <label>LONRF1</label>
    </interactant>
    <organismsDiffer>false</organismsDiffer>
    <experiments>3</experiments>
</comment>
<comment type="interaction">
    <interactant intactId="EBI-715110">
        <id>Q53FE4</id>
    </interactant>
    <interactant intactId="EBI-713635">
        <id>O43639</id>
        <label>NCK2</label>
    </interactant>
    <organismsDiffer>false</organismsDiffer>
    <experiments>3</experiments>
</comment>
<comment type="interaction">
    <interactant intactId="EBI-715110">
        <id>Q53FE4</id>
    </interactant>
    <interactant intactId="EBI-740727">
        <id>Q8TAU3</id>
        <label>ZNF417</label>
    </interactant>
    <organismsDiffer>false</organismsDiffer>
    <experiments>3</experiments>
</comment>
<comment type="alternative products">
    <event type="alternative splicing"/>
    <isoform>
        <id>Q53FE4-1</id>
        <name>1</name>
        <sequence type="displayed"/>
    </isoform>
    <isoform>
        <id>Q53FE4-2</id>
        <name>2</name>
        <sequence type="described" ref="VSP_056907 VSP_056908"/>
    </isoform>
</comment>
<reference key="1">
    <citation type="journal article" date="2001" name="Genome Res.">
        <title>Towards a catalog of human genes and proteins: sequencing and analysis of 500 novel complete protein coding human cDNAs.</title>
        <authorList>
            <person name="Wiemann S."/>
            <person name="Weil B."/>
            <person name="Wellenreuther R."/>
            <person name="Gassenhuber J."/>
            <person name="Glassl S."/>
            <person name="Ansorge W."/>
            <person name="Boecher M."/>
            <person name="Bloecker H."/>
            <person name="Bauersachs S."/>
            <person name="Blum H."/>
            <person name="Lauber J."/>
            <person name="Duesterhoeft A."/>
            <person name="Beyer A."/>
            <person name="Koehrer K."/>
            <person name="Strack N."/>
            <person name="Mewes H.-W."/>
            <person name="Ottenwaelder B."/>
            <person name="Obermaier B."/>
            <person name="Tampe J."/>
            <person name="Heubner D."/>
            <person name="Wambutt R."/>
            <person name="Korn B."/>
            <person name="Klein M."/>
            <person name="Poustka A."/>
        </authorList>
    </citation>
    <scope>NUCLEOTIDE SEQUENCE [LARGE SCALE MRNA] (ISOFORM 1)</scope>
    <scope>VARIANTS GLU-64; PRO-85 AND LYS-91</scope>
    <source>
        <tissue>Testis</tissue>
    </source>
</reference>
<reference key="2">
    <citation type="submission" date="2004-06" db="EMBL/GenBank/DDBJ databases">
        <title>Cloning of human full open reading frames in Gateway(TM) system entry vector (pDONR201).</title>
        <authorList>
            <person name="Ebert L."/>
            <person name="Schick M."/>
            <person name="Neubert P."/>
            <person name="Schatten R."/>
            <person name="Henze S."/>
            <person name="Korn B."/>
        </authorList>
    </citation>
    <scope>NUCLEOTIDE SEQUENCE [LARGE SCALE MRNA] (ISOFORM 1)</scope>
    <scope>VARIANTS GLU-64; PRO-85 AND LYS-91</scope>
</reference>
<reference key="3">
    <citation type="journal article" date="2004" name="Nat. Genet.">
        <title>Complete sequencing and characterization of 21,243 full-length human cDNAs.</title>
        <authorList>
            <person name="Ota T."/>
            <person name="Suzuki Y."/>
            <person name="Nishikawa T."/>
            <person name="Otsuki T."/>
            <person name="Sugiyama T."/>
            <person name="Irie R."/>
            <person name="Wakamatsu A."/>
            <person name="Hayashi K."/>
            <person name="Sato H."/>
            <person name="Nagai K."/>
            <person name="Kimura K."/>
            <person name="Makita H."/>
            <person name="Sekine M."/>
            <person name="Obayashi M."/>
            <person name="Nishi T."/>
            <person name="Shibahara T."/>
            <person name="Tanaka T."/>
            <person name="Ishii S."/>
            <person name="Yamamoto J."/>
            <person name="Saito K."/>
            <person name="Kawai Y."/>
            <person name="Isono Y."/>
            <person name="Nakamura Y."/>
            <person name="Nagahari K."/>
            <person name="Murakami K."/>
            <person name="Yasuda T."/>
            <person name="Iwayanagi T."/>
            <person name="Wagatsuma M."/>
            <person name="Shiratori A."/>
            <person name="Sudo H."/>
            <person name="Hosoiri T."/>
            <person name="Kaku Y."/>
            <person name="Kodaira H."/>
            <person name="Kondo H."/>
            <person name="Sugawara M."/>
            <person name="Takahashi M."/>
            <person name="Kanda K."/>
            <person name="Yokoi T."/>
            <person name="Furuya T."/>
            <person name="Kikkawa E."/>
            <person name="Omura Y."/>
            <person name="Abe K."/>
            <person name="Kamihara K."/>
            <person name="Katsuta N."/>
            <person name="Sato K."/>
            <person name="Tanikawa M."/>
            <person name="Yamazaki M."/>
            <person name="Ninomiya K."/>
            <person name="Ishibashi T."/>
            <person name="Yamashita H."/>
            <person name="Murakawa K."/>
            <person name="Fujimori K."/>
            <person name="Tanai H."/>
            <person name="Kimata M."/>
            <person name="Watanabe M."/>
            <person name="Hiraoka S."/>
            <person name="Chiba Y."/>
            <person name="Ishida S."/>
            <person name="Ono Y."/>
            <person name="Takiguchi S."/>
            <person name="Watanabe S."/>
            <person name="Yosida M."/>
            <person name="Hotuta T."/>
            <person name="Kusano J."/>
            <person name="Kanehori K."/>
            <person name="Takahashi-Fujii A."/>
            <person name="Hara H."/>
            <person name="Tanase T.-O."/>
            <person name="Nomura Y."/>
            <person name="Togiya S."/>
            <person name="Komai F."/>
            <person name="Hara R."/>
            <person name="Takeuchi K."/>
            <person name="Arita M."/>
            <person name="Imose N."/>
            <person name="Musashino K."/>
            <person name="Yuuki H."/>
            <person name="Oshima A."/>
            <person name="Sasaki N."/>
            <person name="Aotsuka S."/>
            <person name="Yoshikawa Y."/>
            <person name="Matsunawa H."/>
            <person name="Ichihara T."/>
            <person name="Shiohata N."/>
            <person name="Sano S."/>
            <person name="Moriya S."/>
            <person name="Momiyama H."/>
            <person name="Satoh N."/>
            <person name="Takami S."/>
            <person name="Terashima Y."/>
            <person name="Suzuki O."/>
            <person name="Nakagawa S."/>
            <person name="Senoh A."/>
            <person name="Mizoguchi H."/>
            <person name="Goto Y."/>
            <person name="Shimizu F."/>
            <person name="Wakebe H."/>
            <person name="Hishigaki H."/>
            <person name="Watanabe T."/>
            <person name="Sugiyama A."/>
            <person name="Takemoto M."/>
            <person name="Kawakami B."/>
            <person name="Yamazaki M."/>
            <person name="Watanabe K."/>
            <person name="Kumagai A."/>
            <person name="Itakura S."/>
            <person name="Fukuzumi Y."/>
            <person name="Fujimori Y."/>
            <person name="Komiyama M."/>
            <person name="Tashiro H."/>
            <person name="Tanigami A."/>
            <person name="Fujiwara T."/>
            <person name="Ono T."/>
            <person name="Yamada K."/>
            <person name="Fujii Y."/>
            <person name="Ozaki K."/>
            <person name="Hirao M."/>
            <person name="Ohmori Y."/>
            <person name="Kawabata A."/>
            <person name="Hikiji T."/>
            <person name="Kobatake N."/>
            <person name="Inagaki H."/>
            <person name="Ikema Y."/>
            <person name="Okamoto S."/>
            <person name="Okitani R."/>
            <person name="Kawakami T."/>
            <person name="Noguchi S."/>
            <person name="Itoh T."/>
            <person name="Shigeta K."/>
            <person name="Senba T."/>
            <person name="Matsumura K."/>
            <person name="Nakajima Y."/>
            <person name="Mizuno T."/>
            <person name="Morinaga M."/>
            <person name="Sasaki M."/>
            <person name="Togashi T."/>
            <person name="Oyama M."/>
            <person name="Hata H."/>
            <person name="Watanabe M."/>
            <person name="Komatsu T."/>
            <person name="Mizushima-Sugano J."/>
            <person name="Satoh T."/>
            <person name="Shirai Y."/>
            <person name="Takahashi Y."/>
            <person name="Nakagawa K."/>
            <person name="Okumura K."/>
            <person name="Nagase T."/>
            <person name="Nomura N."/>
            <person name="Kikuchi H."/>
            <person name="Masuho Y."/>
            <person name="Yamashita R."/>
            <person name="Nakai K."/>
            <person name="Yada T."/>
            <person name="Nakamura Y."/>
            <person name="Ohara O."/>
            <person name="Isogai T."/>
            <person name="Sugano S."/>
        </authorList>
    </citation>
    <scope>NUCLEOTIDE SEQUENCE [LARGE SCALE MRNA] (ISOFORM 2)</scope>
    <source>
        <tissue>Testis</tissue>
    </source>
</reference>
<reference key="4">
    <citation type="submission" date="2005-04" db="EMBL/GenBank/DDBJ databases">
        <authorList>
            <person name="Suzuki Y."/>
            <person name="Sugano S."/>
            <person name="Totoki Y."/>
            <person name="Toyoda A."/>
            <person name="Takeda T."/>
            <person name="Sakaki Y."/>
            <person name="Tanaka A."/>
            <person name="Yokoyama S."/>
        </authorList>
    </citation>
    <scope>NUCLEOTIDE SEQUENCE [LARGE SCALE MRNA] (ISOFORM 1)</scope>
    <source>
        <tissue>Testis</tissue>
    </source>
</reference>
<reference key="5">
    <citation type="journal article" date="2005" name="Nature">
        <title>Generation and annotation of the DNA sequences of human chromosomes 2 and 4.</title>
        <authorList>
            <person name="Hillier L.W."/>
            <person name="Graves T.A."/>
            <person name="Fulton R.S."/>
            <person name="Fulton L.A."/>
            <person name="Pepin K.H."/>
            <person name="Minx P."/>
            <person name="Wagner-McPherson C."/>
            <person name="Layman D."/>
            <person name="Wylie K."/>
            <person name="Sekhon M."/>
            <person name="Becker M.C."/>
            <person name="Fewell G.A."/>
            <person name="Delehaunty K.D."/>
            <person name="Miner T.L."/>
            <person name="Nash W.E."/>
            <person name="Kremitzki C."/>
            <person name="Oddy L."/>
            <person name="Du H."/>
            <person name="Sun H."/>
            <person name="Bradshaw-Cordum H."/>
            <person name="Ali J."/>
            <person name="Carter J."/>
            <person name="Cordes M."/>
            <person name="Harris A."/>
            <person name="Isak A."/>
            <person name="van Brunt A."/>
            <person name="Nguyen C."/>
            <person name="Du F."/>
            <person name="Courtney L."/>
            <person name="Kalicki J."/>
            <person name="Ozersky P."/>
            <person name="Abbott S."/>
            <person name="Armstrong J."/>
            <person name="Belter E.A."/>
            <person name="Caruso L."/>
            <person name="Cedroni M."/>
            <person name="Cotton M."/>
            <person name="Davidson T."/>
            <person name="Desai A."/>
            <person name="Elliott G."/>
            <person name="Erb T."/>
            <person name="Fronick C."/>
            <person name="Gaige T."/>
            <person name="Haakenson W."/>
            <person name="Haglund K."/>
            <person name="Holmes A."/>
            <person name="Harkins R."/>
            <person name="Kim K."/>
            <person name="Kruchowski S.S."/>
            <person name="Strong C.M."/>
            <person name="Grewal N."/>
            <person name="Goyea E."/>
            <person name="Hou S."/>
            <person name="Levy A."/>
            <person name="Martinka S."/>
            <person name="Mead K."/>
            <person name="McLellan M.D."/>
            <person name="Meyer R."/>
            <person name="Randall-Maher J."/>
            <person name="Tomlinson C."/>
            <person name="Dauphin-Kohlberg S."/>
            <person name="Kozlowicz-Reilly A."/>
            <person name="Shah N."/>
            <person name="Swearengen-Shahid S."/>
            <person name="Snider J."/>
            <person name="Strong J.T."/>
            <person name="Thompson J."/>
            <person name="Yoakum M."/>
            <person name="Leonard S."/>
            <person name="Pearman C."/>
            <person name="Trani L."/>
            <person name="Radionenko M."/>
            <person name="Waligorski J.E."/>
            <person name="Wang C."/>
            <person name="Rock S.M."/>
            <person name="Tin-Wollam A.-M."/>
            <person name="Maupin R."/>
            <person name="Latreille P."/>
            <person name="Wendl M.C."/>
            <person name="Yang S.-P."/>
            <person name="Pohl C."/>
            <person name="Wallis J.W."/>
            <person name="Spieth J."/>
            <person name="Bieri T.A."/>
            <person name="Berkowicz N."/>
            <person name="Nelson J.O."/>
            <person name="Osborne J."/>
            <person name="Ding L."/>
            <person name="Meyer R."/>
            <person name="Sabo A."/>
            <person name="Shotland Y."/>
            <person name="Sinha P."/>
            <person name="Wohldmann P.E."/>
            <person name="Cook L.L."/>
            <person name="Hickenbotham M.T."/>
            <person name="Eldred J."/>
            <person name="Williams D."/>
            <person name="Jones T.A."/>
            <person name="She X."/>
            <person name="Ciccarelli F.D."/>
            <person name="Izaurralde E."/>
            <person name="Taylor J."/>
            <person name="Schmutz J."/>
            <person name="Myers R.M."/>
            <person name="Cox D.R."/>
            <person name="Huang X."/>
            <person name="McPherson J.D."/>
            <person name="Mardis E.R."/>
            <person name="Clifton S.W."/>
            <person name="Warren W.C."/>
            <person name="Chinwalla A.T."/>
            <person name="Eddy S.R."/>
            <person name="Marra M.A."/>
            <person name="Ovcharenko I."/>
            <person name="Furey T.S."/>
            <person name="Miller W."/>
            <person name="Eichler E.E."/>
            <person name="Bork P."/>
            <person name="Suyama M."/>
            <person name="Torrents D."/>
            <person name="Waterston R.H."/>
            <person name="Wilson R.K."/>
        </authorList>
    </citation>
    <scope>NUCLEOTIDE SEQUENCE [LARGE SCALE GENOMIC DNA]</scope>
</reference>
<reference key="6">
    <citation type="journal article" date="2004" name="Genome Res.">
        <title>The status, quality, and expansion of the NIH full-length cDNA project: the Mammalian Gene Collection (MGC).</title>
        <authorList>
            <consortium name="The MGC Project Team"/>
        </authorList>
    </citation>
    <scope>NUCLEOTIDE SEQUENCE [LARGE SCALE MRNA] (ISOFORM 1)</scope>
    <scope>VARIANTS GLU-64; PRO-85 AND LYS-91</scope>
    <source>
        <tissue>Testis</tissue>
    </source>
</reference>
<organism>
    <name type="scientific">Homo sapiens</name>
    <name type="common">Human</name>
    <dbReference type="NCBI Taxonomy" id="9606"/>
    <lineage>
        <taxon>Eukaryota</taxon>
        <taxon>Metazoa</taxon>
        <taxon>Chordata</taxon>
        <taxon>Craniata</taxon>
        <taxon>Vertebrata</taxon>
        <taxon>Euteleostomi</taxon>
        <taxon>Mammalia</taxon>
        <taxon>Eutheria</taxon>
        <taxon>Euarchontoglires</taxon>
        <taxon>Primates</taxon>
        <taxon>Haplorrhini</taxon>
        <taxon>Catarrhini</taxon>
        <taxon>Hominidae</taxon>
        <taxon>Homo</taxon>
    </lineage>
</organism>
<dbReference type="EMBL" id="AL136838">
    <property type="protein sequence ID" value="CAB66772.1"/>
    <property type="molecule type" value="mRNA"/>
</dbReference>
<dbReference type="EMBL" id="CR533542">
    <property type="protein sequence ID" value="CAG38573.1"/>
    <property type="molecule type" value="mRNA"/>
</dbReference>
<dbReference type="EMBL" id="AK093085">
    <property type="protein sequence ID" value="BAC04048.1"/>
    <property type="molecule type" value="mRNA"/>
</dbReference>
<dbReference type="EMBL" id="AK223345">
    <property type="protein sequence ID" value="BAD97065.1"/>
    <property type="molecule type" value="mRNA"/>
</dbReference>
<dbReference type="EMBL" id="AC083902">
    <property type="status" value="NOT_ANNOTATED_CDS"/>
    <property type="molecule type" value="Genomic_DNA"/>
</dbReference>
<dbReference type="EMBL" id="AP001960">
    <property type="status" value="NOT_ANNOTATED_CDS"/>
    <property type="molecule type" value="Genomic_DNA"/>
</dbReference>
<dbReference type="EMBL" id="BC069805">
    <property type="protein sequence ID" value="AAH69805.1"/>
    <property type="molecule type" value="mRNA"/>
</dbReference>
<dbReference type="EMBL" id="BC074759">
    <property type="protein sequence ID" value="AAH74759.1"/>
    <property type="molecule type" value="mRNA"/>
</dbReference>
<dbReference type="CCDS" id="CCDS3649.1">
    <molecule id="Q53FE4-1"/>
</dbReference>
<dbReference type="RefSeq" id="NP_115525.2">
    <molecule id="Q53FE4-1"/>
    <property type="nucleotide sequence ID" value="NM_032149.3"/>
</dbReference>
<dbReference type="BioGRID" id="123892">
    <property type="interactions" value="16"/>
</dbReference>
<dbReference type="FunCoup" id="Q53FE4">
    <property type="interactions" value="3"/>
</dbReference>
<dbReference type="IntAct" id="Q53FE4">
    <property type="interactions" value="15"/>
</dbReference>
<dbReference type="MINT" id="Q53FE4"/>
<dbReference type="STRING" id="9606.ENSP00000322582"/>
<dbReference type="iPTMnet" id="Q53FE4"/>
<dbReference type="PhosphoSitePlus" id="Q53FE4"/>
<dbReference type="BioMuta" id="C4orf17"/>
<dbReference type="MassIVE" id="Q53FE4"/>
<dbReference type="PaxDb" id="9606-ENSP00000322582"/>
<dbReference type="PeptideAtlas" id="Q53FE4"/>
<dbReference type="Antibodypedia" id="63838">
    <property type="antibodies" value="40 antibodies from 10 providers"/>
</dbReference>
<dbReference type="DNASU" id="84103"/>
<dbReference type="Ensembl" id="ENST00000326581.9">
    <molecule id="Q53FE4-1"/>
    <property type="protein sequence ID" value="ENSP00000322582.4"/>
    <property type="gene ID" value="ENSG00000138813.10"/>
</dbReference>
<dbReference type="Ensembl" id="ENST00000477187.1">
    <molecule id="Q53FE4-2"/>
    <property type="protein sequence ID" value="ENSP00000423411.1"/>
    <property type="gene ID" value="ENSG00000138813.10"/>
</dbReference>
<dbReference type="GeneID" id="84103"/>
<dbReference type="KEGG" id="hsa:84103"/>
<dbReference type="MANE-Select" id="ENST00000326581.9">
    <property type="protein sequence ID" value="ENSP00000322582.4"/>
    <property type="RefSeq nucleotide sequence ID" value="NM_032149.3"/>
    <property type="RefSeq protein sequence ID" value="NP_115525.2"/>
</dbReference>
<dbReference type="UCSC" id="uc003huw.3">
    <molecule id="Q53FE4-1"/>
    <property type="organism name" value="human"/>
</dbReference>
<dbReference type="AGR" id="HGNC:25274"/>
<dbReference type="CTD" id="84103"/>
<dbReference type="DisGeNET" id="84103"/>
<dbReference type="GeneCards" id="C4orf17"/>
<dbReference type="HGNC" id="HGNC:25274">
    <property type="gene designation" value="C4orf17"/>
</dbReference>
<dbReference type="HPA" id="ENSG00000138813">
    <property type="expression patterns" value="Tissue enriched (testis)"/>
</dbReference>
<dbReference type="neXtProt" id="NX_Q53FE4"/>
<dbReference type="OpenTargets" id="ENSG00000138813"/>
<dbReference type="PharmGKB" id="PA134913125"/>
<dbReference type="VEuPathDB" id="HostDB:ENSG00000138813"/>
<dbReference type="eggNOG" id="ENOG502SU2P">
    <property type="taxonomic scope" value="Eukaryota"/>
</dbReference>
<dbReference type="GeneTree" id="ENSGT00510000048844"/>
<dbReference type="HOGENOM" id="CLU_134784_0_0_1"/>
<dbReference type="InParanoid" id="Q53FE4"/>
<dbReference type="OMA" id="TKPMSAR"/>
<dbReference type="OrthoDB" id="9982103at2759"/>
<dbReference type="PAN-GO" id="Q53FE4">
    <property type="GO annotations" value="0 GO annotations based on evolutionary models"/>
</dbReference>
<dbReference type="PhylomeDB" id="Q53FE4"/>
<dbReference type="TreeFam" id="TF330946"/>
<dbReference type="PathwayCommons" id="Q53FE4"/>
<dbReference type="SignaLink" id="Q53FE4"/>
<dbReference type="BioGRID-ORCS" id="84103">
    <property type="hits" value="15 hits in 1114 CRISPR screens"/>
</dbReference>
<dbReference type="GenomeRNAi" id="84103"/>
<dbReference type="Pharos" id="Q53FE4">
    <property type="development level" value="Tdark"/>
</dbReference>
<dbReference type="PRO" id="PR:Q53FE4"/>
<dbReference type="Proteomes" id="UP000005640">
    <property type="component" value="Chromosome 4"/>
</dbReference>
<dbReference type="RNAct" id="Q53FE4">
    <property type="molecule type" value="protein"/>
</dbReference>
<dbReference type="Bgee" id="ENSG00000138813">
    <property type="expression patterns" value="Expressed in left ventricle myocardium and 39 other cell types or tissues"/>
</dbReference>
<dbReference type="ExpressionAtlas" id="Q53FE4">
    <property type="expression patterns" value="baseline and differential"/>
</dbReference>
<dbReference type="InterPro" id="IPR037394">
    <property type="entry name" value="TBATA-like"/>
</dbReference>
<dbReference type="PANTHER" id="PTHR33772:SF2">
    <property type="entry name" value="RIKEN CDNA 4930579F01 GENE"/>
    <property type="match status" value="1"/>
</dbReference>
<dbReference type="PANTHER" id="PTHR33772">
    <property type="entry name" value="THYMUS, BRAIN AND TESTES-ASSOCIATED"/>
    <property type="match status" value="1"/>
</dbReference>
<dbReference type="Pfam" id="PF15256">
    <property type="entry name" value="SPATIAL"/>
    <property type="match status" value="1"/>
</dbReference>
<protein>
    <recommendedName>
        <fullName>Uncharacterized protein C4orf17</fullName>
    </recommendedName>
</protein>
<name>CD017_HUMAN</name>
<feature type="chain" id="PRO_0000089433" description="Uncharacterized protein C4orf17">
    <location>
        <begin position="1"/>
        <end position="359"/>
    </location>
</feature>
<feature type="region of interest" description="Disordered" evidence="1">
    <location>
        <begin position="90"/>
        <end position="117"/>
    </location>
</feature>
<feature type="region of interest" description="Disordered" evidence="1">
    <location>
        <begin position="132"/>
        <end position="161"/>
    </location>
</feature>
<feature type="region of interest" description="Disordered" evidence="1">
    <location>
        <begin position="235"/>
        <end position="359"/>
    </location>
</feature>
<feature type="compositionally biased region" description="Polar residues" evidence="1">
    <location>
        <begin position="151"/>
        <end position="161"/>
    </location>
</feature>
<feature type="compositionally biased region" description="Low complexity" evidence="1">
    <location>
        <begin position="245"/>
        <end position="259"/>
    </location>
</feature>
<feature type="compositionally biased region" description="Basic and acidic residues" evidence="1">
    <location>
        <begin position="286"/>
        <end position="299"/>
    </location>
</feature>
<feature type="splice variant" id="VSP_056907" description="In isoform 2." evidence="5">
    <original>ILAK</original>
    <variation>ATLL</variation>
    <location>
        <begin position="183"/>
        <end position="186"/>
    </location>
</feature>
<feature type="splice variant" id="VSP_056908" description="In isoform 2." evidence="5">
    <location>
        <begin position="187"/>
        <end position="359"/>
    </location>
</feature>
<feature type="sequence variant" id="VAR_028110" description="In dbSNP:rs13143848." evidence="2 3 4">
    <original>G</original>
    <variation>E</variation>
    <location>
        <position position="64"/>
    </location>
</feature>
<feature type="sequence variant" id="VAR_028111" description="In dbSNP:rs13119384." evidence="2 3 4">
    <original>S</original>
    <variation>P</variation>
    <location>
        <position position="85"/>
    </location>
</feature>
<feature type="sequence variant" id="VAR_028112" description="In dbSNP:rs17029087." evidence="2 3 4">
    <original>E</original>
    <variation>K</variation>
    <location>
        <position position="91"/>
    </location>
</feature>
<feature type="sequence conflict" description="In Ref. 2; CAG38573." evidence="6" ref="2">
    <original>K</original>
    <variation>R</variation>
    <location>
        <position position="289"/>
    </location>
</feature>